<feature type="chain" id="PRO_1000088576" description="Tyrosine--tRNA ligase">
    <location>
        <begin position="1"/>
        <end position="421"/>
    </location>
</feature>
<feature type="domain" description="S4 RNA-binding" evidence="1">
    <location>
        <begin position="355"/>
        <end position="421"/>
    </location>
</feature>
<feature type="short sequence motif" description="'HIGH' region">
    <location>
        <begin position="40"/>
        <end position="49"/>
    </location>
</feature>
<feature type="short sequence motif" description="'KMSKS' region">
    <location>
        <begin position="232"/>
        <end position="236"/>
    </location>
</feature>
<feature type="binding site" evidence="1">
    <location>
        <position position="35"/>
    </location>
    <ligand>
        <name>L-tyrosine</name>
        <dbReference type="ChEBI" id="CHEBI:58315"/>
    </ligand>
</feature>
<feature type="binding site" evidence="1">
    <location>
        <position position="170"/>
    </location>
    <ligand>
        <name>L-tyrosine</name>
        <dbReference type="ChEBI" id="CHEBI:58315"/>
    </ligand>
</feature>
<feature type="binding site" evidence="1">
    <location>
        <position position="174"/>
    </location>
    <ligand>
        <name>L-tyrosine</name>
        <dbReference type="ChEBI" id="CHEBI:58315"/>
    </ligand>
</feature>
<feature type="binding site" evidence="1">
    <location>
        <position position="235"/>
    </location>
    <ligand>
        <name>ATP</name>
        <dbReference type="ChEBI" id="CHEBI:30616"/>
    </ligand>
</feature>
<sequence length="421" mass="47756">MTNLLEDLSFRGLIQQMTDEEGLNKQLNEEKIRLYSGFDPTADSLHIGHLLPILTLRRFQLAGHHPIALVGGATGLIGDPSGKKAERTLNTQDIVVEWSQKIKNQLSRFLDFEAGENPAVIANNFDWIGKLSIIEFLRDVGKNFGINYMLAKDTVSSRIETGISYTEFSYMILQSYDFLNLYREKNCKLQIGGSDQWGNITAGLELIRKSEEEGAKAFGLTIPLVTKADGTKFGKTEGGAIWLDKEKTSPYEFYQFWINTDDRDVVKYLKYFTFLSKEEIEAYAEKTETAPEKREAQKRLAEEVTVLVHGREALEQAVHISQALFSGNIKELSAQDVKVGFKDVPSFEKDRSEELSLVDVLVESKLSPSKRQAREDIQNGAVYINGERQTDIGHLLTAEDRIEDQFTVLRRGKKKYFLITY</sequence>
<gene>
    <name evidence="1" type="primary">tyrS</name>
    <name type="ordered locus">RBAM_026790</name>
</gene>
<organism>
    <name type="scientific">Bacillus velezensis (strain DSM 23117 / BGSC 10A6 / LMG 26770 / FZB42)</name>
    <name type="common">Bacillus amyloliquefaciens subsp. plantarum</name>
    <dbReference type="NCBI Taxonomy" id="326423"/>
    <lineage>
        <taxon>Bacteria</taxon>
        <taxon>Bacillati</taxon>
        <taxon>Bacillota</taxon>
        <taxon>Bacilli</taxon>
        <taxon>Bacillales</taxon>
        <taxon>Bacillaceae</taxon>
        <taxon>Bacillus</taxon>
        <taxon>Bacillus amyloliquefaciens group</taxon>
    </lineage>
</organism>
<accession>A7Z7R1</accession>
<protein>
    <recommendedName>
        <fullName evidence="1">Tyrosine--tRNA ligase</fullName>
        <ecNumber evidence="1">6.1.1.1</ecNumber>
    </recommendedName>
    <alternativeName>
        <fullName evidence="1">Tyrosyl-tRNA synthetase</fullName>
        <shortName evidence="1">TyrRS</shortName>
    </alternativeName>
</protein>
<dbReference type="EC" id="6.1.1.1" evidence="1"/>
<dbReference type="EMBL" id="CP000560">
    <property type="protein sequence ID" value="ABS75037.1"/>
    <property type="molecule type" value="Genomic_DNA"/>
</dbReference>
<dbReference type="RefSeq" id="WP_007613147.1">
    <property type="nucleotide sequence ID" value="NC_009725.2"/>
</dbReference>
<dbReference type="SMR" id="A7Z7R1"/>
<dbReference type="GeneID" id="93081819"/>
<dbReference type="KEGG" id="bay:RBAM_026790"/>
<dbReference type="HOGENOM" id="CLU_024003_0_3_9"/>
<dbReference type="Proteomes" id="UP000001120">
    <property type="component" value="Chromosome"/>
</dbReference>
<dbReference type="GO" id="GO:0005829">
    <property type="term" value="C:cytosol"/>
    <property type="evidence" value="ECO:0007669"/>
    <property type="project" value="TreeGrafter"/>
</dbReference>
<dbReference type="GO" id="GO:0005524">
    <property type="term" value="F:ATP binding"/>
    <property type="evidence" value="ECO:0007669"/>
    <property type="project" value="UniProtKB-UniRule"/>
</dbReference>
<dbReference type="GO" id="GO:0003723">
    <property type="term" value="F:RNA binding"/>
    <property type="evidence" value="ECO:0007669"/>
    <property type="project" value="UniProtKB-KW"/>
</dbReference>
<dbReference type="GO" id="GO:0004831">
    <property type="term" value="F:tyrosine-tRNA ligase activity"/>
    <property type="evidence" value="ECO:0007669"/>
    <property type="project" value="UniProtKB-UniRule"/>
</dbReference>
<dbReference type="GO" id="GO:0006437">
    <property type="term" value="P:tyrosyl-tRNA aminoacylation"/>
    <property type="evidence" value="ECO:0007669"/>
    <property type="project" value="UniProtKB-UniRule"/>
</dbReference>
<dbReference type="CDD" id="cd00165">
    <property type="entry name" value="S4"/>
    <property type="match status" value="1"/>
</dbReference>
<dbReference type="CDD" id="cd00395">
    <property type="entry name" value="Tyr_Trp_RS_core"/>
    <property type="match status" value="1"/>
</dbReference>
<dbReference type="FunFam" id="1.10.240.10:FF:000001">
    <property type="entry name" value="Tyrosine--tRNA ligase"/>
    <property type="match status" value="1"/>
</dbReference>
<dbReference type="FunFam" id="3.40.50.620:FF:000008">
    <property type="entry name" value="Tyrosine--tRNA ligase"/>
    <property type="match status" value="1"/>
</dbReference>
<dbReference type="Gene3D" id="3.40.50.620">
    <property type="entry name" value="HUPs"/>
    <property type="match status" value="1"/>
</dbReference>
<dbReference type="Gene3D" id="3.10.290.10">
    <property type="entry name" value="RNA-binding S4 domain"/>
    <property type="match status" value="1"/>
</dbReference>
<dbReference type="Gene3D" id="1.10.240.10">
    <property type="entry name" value="Tyrosyl-Transfer RNA Synthetase"/>
    <property type="match status" value="1"/>
</dbReference>
<dbReference type="HAMAP" id="MF_02006">
    <property type="entry name" value="Tyr_tRNA_synth_type1"/>
    <property type="match status" value="1"/>
</dbReference>
<dbReference type="InterPro" id="IPR001412">
    <property type="entry name" value="aa-tRNA-synth_I_CS"/>
</dbReference>
<dbReference type="InterPro" id="IPR002305">
    <property type="entry name" value="aa-tRNA-synth_Ic"/>
</dbReference>
<dbReference type="InterPro" id="IPR014729">
    <property type="entry name" value="Rossmann-like_a/b/a_fold"/>
</dbReference>
<dbReference type="InterPro" id="IPR002942">
    <property type="entry name" value="S4_RNA-bd"/>
</dbReference>
<dbReference type="InterPro" id="IPR036986">
    <property type="entry name" value="S4_RNA-bd_sf"/>
</dbReference>
<dbReference type="InterPro" id="IPR054608">
    <property type="entry name" value="SYY-like_C"/>
</dbReference>
<dbReference type="InterPro" id="IPR002307">
    <property type="entry name" value="Tyr-tRNA-ligase"/>
</dbReference>
<dbReference type="InterPro" id="IPR024088">
    <property type="entry name" value="Tyr-tRNA-ligase_bac-type"/>
</dbReference>
<dbReference type="InterPro" id="IPR024107">
    <property type="entry name" value="Tyr-tRNA-ligase_bac_1"/>
</dbReference>
<dbReference type="NCBIfam" id="TIGR00234">
    <property type="entry name" value="tyrS"/>
    <property type="match status" value="1"/>
</dbReference>
<dbReference type="PANTHER" id="PTHR11766:SF0">
    <property type="entry name" value="TYROSINE--TRNA LIGASE, MITOCHONDRIAL"/>
    <property type="match status" value="1"/>
</dbReference>
<dbReference type="PANTHER" id="PTHR11766">
    <property type="entry name" value="TYROSYL-TRNA SYNTHETASE"/>
    <property type="match status" value="1"/>
</dbReference>
<dbReference type="Pfam" id="PF22421">
    <property type="entry name" value="SYY_C-terminal"/>
    <property type="match status" value="1"/>
</dbReference>
<dbReference type="Pfam" id="PF00579">
    <property type="entry name" value="tRNA-synt_1b"/>
    <property type="match status" value="1"/>
</dbReference>
<dbReference type="PRINTS" id="PR01040">
    <property type="entry name" value="TRNASYNTHTYR"/>
</dbReference>
<dbReference type="SMART" id="SM00363">
    <property type="entry name" value="S4"/>
    <property type="match status" value="1"/>
</dbReference>
<dbReference type="SUPFAM" id="SSF55174">
    <property type="entry name" value="Alpha-L RNA-binding motif"/>
    <property type="match status" value="1"/>
</dbReference>
<dbReference type="SUPFAM" id="SSF52374">
    <property type="entry name" value="Nucleotidylyl transferase"/>
    <property type="match status" value="1"/>
</dbReference>
<dbReference type="PROSITE" id="PS00178">
    <property type="entry name" value="AA_TRNA_LIGASE_I"/>
    <property type="match status" value="1"/>
</dbReference>
<dbReference type="PROSITE" id="PS50889">
    <property type="entry name" value="S4"/>
    <property type="match status" value="1"/>
</dbReference>
<keyword id="KW-0030">Aminoacyl-tRNA synthetase</keyword>
<keyword id="KW-0067">ATP-binding</keyword>
<keyword id="KW-0963">Cytoplasm</keyword>
<keyword id="KW-0436">Ligase</keyword>
<keyword id="KW-0547">Nucleotide-binding</keyword>
<keyword id="KW-0648">Protein biosynthesis</keyword>
<keyword id="KW-0694">RNA-binding</keyword>
<reference key="1">
    <citation type="journal article" date="2007" name="Nat. Biotechnol.">
        <title>Comparative analysis of the complete genome sequence of the plant growth-promoting bacterium Bacillus amyloliquefaciens FZB42.</title>
        <authorList>
            <person name="Chen X.H."/>
            <person name="Koumoutsi A."/>
            <person name="Scholz R."/>
            <person name="Eisenreich A."/>
            <person name="Schneider K."/>
            <person name="Heinemeyer I."/>
            <person name="Morgenstern B."/>
            <person name="Voss B."/>
            <person name="Hess W.R."/>
            <person name="Reva O."/>
            <person name="Junge H."/>
            <person name="Voigt B."/>
            <person name="Jungblut P.R."/>
            <person name="Vater J."/>
            <person name="Suessmuth R."/>
            <person name="Liesegang H."/>
            <person name="Strittmatter A."/>
            <person name="Gottschalk G."/>
            <person name="Borriss R."/>
        </authorList>
    </citation>
    <scope>NUCLEOTIDE SEQUENCE [LARGE SCALE GENOMIC DNA]</scope>
    <source>
        <strain>DSM 23117 / BGSC 10A6 / LMG 26770 / FZB42</strain>
    </source>
</reference>
<proteinExistence type="inferred from homology"/>
<evidence type="ECO:0000255" key="1">
    <source>
        <dbReference type="HAMAP-Rule" id="MF_02006"/>
    </source>
</evidence>
<comment type="function">
    <text evidence="1">Catalyzes the attachment of tyrosine to tRNA(Tyr) in a two-step reaction: tyrosine is first activated by ATP to form Tyr-AMP and then transferred to the acceptor end of tRNA(Tyr).</text>
</comment>
<comment type="catalytic activity">
    <reaction evidence="1">
        <text>tRNA(Tyr) + L-tyrosine + ATP = L-tyrosyl-tRNA(Tyr) + AMP + diphosphate + H(+)</text>
        <dbReference type="Rhea" id="RHEA:10220"/>
        <dbReference type="Rhea" id="RHEA-COMP:9706"/>
        <dbReference type="Rhea" id="RHEA-COMP:9707"/>
        <dbReference type="ChEBI" id="CHEBI:15378"/>
        <dbReference type="ChEBI" id="CHEBI:30616"/>
        <dbReference type="ChEBI" id="CHEBI:33019"/>
        <dbReference type="ChEBI" id="CHEBI:58315"/>
        <dbReference type="ChEBI" id="CHEBI:78442"/>
        <dbReference type="ChEBI" id="CHEBI:78536"/>
        <dbReference type="ChEBI" id="CHEBI:456215"/>
        <dbReference type="EC" id="6.1.1.1"/>
    </reaction>
</comment>
<comment type="subunit">
    <text evidence="1">Homodimer.</text>
</comment>
<comment type="subcellular location">
    <subcellularLocation>
        <location evidence="1">Cytoplasm</location>
    </subcellularLocation>
</comment>
<comment type="similarity">
    <text evidence="1">Belongs to the class-I aminoacyl-tRNA synthetase family. TyrS type 1 subfamily.</text>
</comment>
<name>SYY_BACVZ</name>